<reference key="1">
    <citation type="submission" date="2006-08" db="EMBL/GenBank/DDBJ databases">
        <title>Positive selection in transcription factor genes on the human lineage.</title>
        <authorList>
            <person name="Nickel G.C."/>
            <person name="Tefft D.L."/>
            <person name="Trevarthen K."/>
            <person name="Funt J."/>
            <person name="Adams M.D."/>
        </authorList>
    </citation>
    <scope>NUCLEOTIDE SEQUENCE [GENOMIC DNA]</scope>
</reference>
<keyword id="KW-0238">DNA-binding</keyword>
<keyword id="KW-0371">Homeobox</keyword>
<keyword id="KW-0539">Nucleus</keyword>
<keyword id="KW-1185">Reference proteome</keyword>
<keyword id="KW-0804">Transcription</keyword>
<keyword id="KW-0805">Transcription regulation</keyword>
<gene>
    <name type="primary">TGIF2LX</name>
    <name type="synonym">TGIFLX</name>
</gene>
<accession>A1YGI6</accession>
<evidence type="ECO:0000250" key="1"/>
<evidence type="ECO:0000255" key="2">
    <source>
        <dbReference type="PROSITE-ProRule" id="PRU00108"/>
    </source>
</evidence>
<evidence type="ECO:0000256" key="3">
    <source>
        <dbReference type="SAM" id="MobiDB-lite"/>
    </source>
</evidence>
<evidence type="ECO:0000305" key="4"/>
<dbReference type="EMBL" id="DQ977282">
    <property type="protein sequence ID" value="ABM54411.1"/>
    <property type="molecule type" value="Genomic_DNA"/>
</dbReference>
<dbReference type="RefSeq" id="XP_003810418.1">
    <property type="nucleotide sequence ID" value="XM_003810370.3"/>
</dbReference>
<dbReference type="BMRB" id="A1YGI6"/>
<dbReference type="SMR" id="A1YGI6"/>
<dbReference type="GeneID" id="100974279"/>
<dbReference type="KEGG" id="pps:100974279"/>
<dbReference type="CTD" id="90316"/>
<dbReference type="eggNOG" id="KOG0773">
    <property type="taxonomic scope" value="Eukaryota"/>
</dbReference>
<dbReference type="OrthoDB" id="13398at9604"/>
<dbReference type="Proteomes" id="UP000240080">
    <property type="component" value="Unplaced"/>
</dbReference>
<dbReference type="GO" id="GO:0005634">
    <property type="term" value="C:nucleus"/>
    <property type="evidence" value="ECO:0007669"/>
    <property type="project" value="UniProtKB-SubCell"/>
</dbReference>
<dbReference type="GO" id="GO:0003677">
    <property type="term" value="F:DNA binding"/>
    <property type="evidence" value="ECO:0007669"/>
    <property type="project" value="UniProtKB-KW"/>
</dbReference>
<dbReference type="GO" id="GO:0006355">
    <property type="term" value="P:regulation of DNA-templated transcription"/>
    <property type="evidence" value="ECO:0007669"/>
    <property type="project" value="InterPro"/>
</dbReference>
<dbReference type="CDD" id="cd00086">
    <property type="entry name" value="homeodomain"/>
    <property type="match status" value="1"/>
</dbReference>
<dbReference type="FunFam" id="1.10.10.60:FF:000059">
    <property type="entry name" value="TGFB-induced factor homeobox 1"/>
    <property type="match status" value="1"/>
</dbReference>
<dbReference type="Gene3D" id="1.10.10.60">
    <property type="entry name" value="Homeodomain-like"/>
    <property type="match status" value="1"/>
</dbReference>
<dbReference type="InterPro" id="IPR001356">
    <property type="entry name" value="HD"/>
</dbReference>
<dbReference type="InterPro" id="IPR009057">
    <property type="entry name" value="Homeodomain-like_sf"/>
</dbReference>
<dbReference type="InterPro" id="IPR008422">
    <property type="entry name" value="KN_HD"/>
</dbReference>
<dbReference type="InterPro" id="IPR050224">
    <property type="entry name" value="TALE_homeobox"/>
</dbReference>
<dbReference type="PANTHER" id="PTHR11850">
    <property type="entry name" value="HOMEOBOX PROTEIN TRANSCRIPTION FACTORS"/>
    <property type="match status" value="1"/>
</dbReference>
<dbReference type="Pfam" id="PF05920">
    <property type="entry name" value="Homeobox_KN"/>
    <property type="match status" value="1"/>
</dbReference>
<dbReference type="SMART" id="SM00389">
    <property type="entry name" value="HOX"/>
    <property type="match status" value="1"/>
</dbReference>
<dbReference type="SUPFAM" id="SSF46689">
    <property type="entry name" value="Homeodomain-like"/>
    <property type="match status" value="1"/>
</dbReference>
<dbReference type="PROSITE" id="PS50071">
    <property type="entry name" value="HOMEOBOX_2"/>
    <property type="match status" value="1"/>
</dbReference>
<proteinExistence type="inferred from homology"/>
<organism>
    <name type="scientific">Pan paniscus</name>
    <name type="common">Pygmy chimpanzee</name>
    <name type="synonym">Bonobo</name>
    <dbReference type="NCBI Taxonomy" id="9597"/>
    <lineage>
        <taxon>Eukaryota</taxon>
        <taxon>Metazoa</taxon>
        <taxon>Chordata</taxon>
        <taxon>Craniata</taxon>
        <taxon>Vertebrata</taxon>
        <taxon>Euteleostomi</taxon>
        <taxon>Mammalia</taxon>
        <taxon>Eutheria</taxon>
        <taxon>Euarchontoglires</taxon>
        <taxon>Primates</taxon>
        <taxon>Haplorrhini</taxon>
        <taxon>Catarrhini</taxon>
        <taxon>Hominidae</taxon>
        <taxon>Pan</taxon>
    </lineage>
</organism>
<sequence length="241" mass="26637">MEAAADGPAETQSPVQKDSPAKTQSPAQDTSIMSRNNADTGRVLALPEHKKKRKGNLPAESVKILRDWMYKHRFKAYPSEEEKQMLSEKTNLSLLQISNWFINARRRILPDMLQQHRNDPIIGHKTGKGAHATHLQSTEASVPAKSGPSGPDNVQSLPLWPLPKGQMSREKQPDPESAPSQKLTGIAQPKKKVKVSITSPSSPELVSPEEYADFSSFLLLVDAAVQRAAELELEKKQEPNP</sequence>
<name>TF2LX_PANPA</name>
<feature type="chain" id="PRO_0000285544" description="Homeobox protein TGIF2LX">
    <location>
        <begin position="1"/>
        <end position="241"/>
    </location>
</feature>
<feature type="DNA-binding region" description="Homeobox; TALE-type" evidence="2">
    <location>
        <begin position="48"/>
        <end position="111"/>
    </location>
</feature>
<feature type="region of interest" description="Disordered" evidence="3">
    <location>
        <begin position="1"/>
        <end position="58"/>
    </location>
</feature>
<feature type="region of interest" description="Disordered" evidence="3">
    <location>
        <begin position="127"/>
        <end position="207"/>
    </location>
</feature>
<feature type="compositionally biased region" description="Polar residues" evidence="3">
    <location>
        <begin position="10"/>
        <end position="39"/>
    </location>
</feature>
<comment type="function">
    <text evidence="1">May have a transcription role in testis.</text>
</comment>
<comment type="subcellular location">
    <subcellularLocation>
        <location evidence="2">Nucleus</location>
    </subcellularLocation>
</comment>
<comment type="similarity">
    <text evidence="4">Belongs to the TALE/TGIF homeobox family.</text>
</comment>
<protein>
    <recommendedName>
        <fullName>Homeobox protein TGIF2LX</fullName>
    </recommendedName>
    <alternativeName>
        <fullName>TGF-beta-induced transcription factor 2-like protein</fullName>
    </alternativeName>
    <alternativeName>
        <fullName>TGFB-induced factor 2-like protein, X-linked</fullName>
    </alternativeName>
    <alternativeName>
        <fullName>TGIF-like on the X</fullName>
    </alternativeName>
</protein>